<feature type="chain" id="PRO_0000151437" description="Phosphoribosylamine--glycine ligase">
    <location>
        <begin position="1"/>
        <end position="427"/>
    </location>
</feature>
<feature type="domain" description="ATP-grasp" evidence="2">
    <location>
        <begin position="107"/>
        <end position="312"/>
    </location>
</feature>
<feature type="binding site" evidence="2">
    <location>
        <begin position="133"/>
        <end position="193"/>
    </location>
    <ligand>
        <name>ATP</name>
        <dbReference type="ChEBI" id="CHEBI:30616"/>
    </ligand>
</feature>
<feature type="binding site" evidence="2">
    <location>
        <position position="282"/>
    </location>
    <ligand>
        <name>Mg(2+)</name>
        <dbReference type="ChEBI" id="CHEBI:18420"/>
    </ligand>
</feature>
<feature type="binding site" evidence="2">
    <location>
        <position position="284"/>
    </location>
    <ligand>
        <name>Mg(2+)</name>
        <dbReference type="ChEBI" id="CHEBI:18420"/>
    </ligand>
</feature>
<name>PUR2_BRUME</name>
<proteinExistence type="inferred from homology"/>
<protein>
    <recommendedName>
        <fullName evidence="2">Phosphoribosylamine--glycine ligase</fullName>
        <ecNumber evidence="2">6.3.4.13</ecNumber>
    </recommendedName>
    <alternativeName>
        <fullName evidence="2">GARS</fullName>
    </alternativeName>
    <alternativeName>
        <fullName evidence="2">Glycinamide ribonucleotide synthetase</fullName>
    </alternativeName>
    <alternativeName>
        <fullName evidence="2">Phosphoribosylglycinamide synthetase</fullName>
    </alternativeName>
</protein>
<sequence>MKVLLIGSGGREHALAWKLAASPLLEKLYCALGNPGIAAVAELADIGVDDHAALIAFAKEKHIDLVVVGPEAPLVAGLADEMRAEGIRVFGPSRAAAQLEGSKGFTKDLCARFNIPTGAYGRFNNAPKAKAYIRQQGAPIVVKADGLAAGKGVVVAMTLQEALDAVDSCFEGAFGAAGAEVVVEEFLDGEEASFFCICDGKTALPLGSAQDHKRVGDGDTGPNTGGMGAYAPAPVMTPEMVARTMRELIEPTMRGMAEIGAPFSGILFAGLMITSDGPKLIEYNTRFGDPECQVLMMRLNSDLLALVNAAVDGRLDEVSLEWKDEPALTVVMAAEGYPANVKKGSVIRDLEKLESIDGVKLFHAGTALKDGAIVASGGRVLNITATAATVAQAQARAYEALKLIDWPEGFYRSDIGWRAVEREKANR</sequence>
<reference key="1">
    <citation type="journal article" date="2002" name="Proc. Natl. Acad. Sci. U.S.A.">
        <title>The genome sequence of the facultative intracellular pathogen Brucella melitensis.</title>
        <authorList>
            <person name="DelVecchio V.G."/>
            <person name="Kapatral V."/>
            <person name="Redkar R.J."/>
            <person name="Patra G."/>
            <person name="Mujer C."/>
            <person name="Los T."/>
            <person name="Ivanova N."/>
            <person name="Anderson I."/>
            <person name="Bhattacharyya A."/>
            <person name="Lykidis A."/>
            <person name="Reznik G."/>
            <person name="Jablonski L."/>
            <person name="Larsen N."/>
            <person name="D'Souza M."/>
            <person name="Bernal A."/>
            <person name="Mazur M."/>
            <person name="Goltsman E."/>
            <person name="Selkov E."/>
            <person name="Elzer P.H."/>
            <person name="Hagius S."/>
            <person name="O'Callaghan D."/>
            <person name="Letesson J.-J."/>
            <person name="Haselkorn R."/>
            <person name="Kyrpides N.C."/>
            <person name="Overbeek R."/>
        </authorList>
    </citation>
    <scope>NUCLEOTIDE SEQUENCE [LARGE SCALE GENOMIC DNA]</scope>
    <source>
        <strain>ATCC 23456 / CCUG 17765 / NCTC 10094 / 16M</strain>
    </source>
</reference>
<organism>
    <name type="scientific">Brucella melitensis biotype 1 (strain ATCC 23456 / CCUG 17765 / NCTC 10094 / 16M)</name>
    <dbReference type="NCBI Taxonomy" id="224914"/>
    <lineage>
        <taxon>Bacteria</taxon>
        <taxon>Pseudomonadati</taxon>
        <taxon>Pseudomonadota</taxon>
        <taxon>Alphaproteobacteria</taxon>
        <taxon>Hyphomicrobiales</taxon>
        <taxon>Brucellaceae</taxon>
        <taxon>Brucella/Ochrobactrum group</taxon>
        <taxon>Brucella</taxon>
    </lineage>
</organism>
<comment type="catalytic activity">
    <reaction evidence="2">
        <text>5-phospho-beta-D-ribosylamine + glycine + ATP = N(1)-(5-phospho-beta-D-ribosyl)glycinamide + ADP + phosphate + H(+)</text>
        <dbReference type="Rhea" id="RHEA:17453"/>
        <dbReference type="ChEBI" id="CHEBI:15378"/>
        <dbReference type="ChEBI" id="CHEBI:30616"/>
        <dbReference type="ChEBI" id="CHEBI:43474"/>
        <dbReference type="ChEBI" id="CHEBI:57305"/>
        <dbReference type="ChEBI" id="CHEBI:58681"/>
        <dbReference type="ChEBI" id="CHEBI:143788"/>
        <dbReference type="ChEBI" id="CHEBI:456216"/>
        <dbReference type="EC" id="6.3.4.13"/>
    </reaction>
</comment>
<comment type="cofactor">
    <cofactor evidence="1">
        <name>Mg(2+)</name>
        <dbReference type="ChEBI" id="CHEBI:18420"/>
    </cofactor>
    <cofactor evidence="1">
        <name>Mn(2+)</name>
        <dbReference type="ChEBI" id="CHEBI:29035"/>
    </cofactor>
    <text evidence="1">Binds 1 Mg(2+) or Mn(2+) ion per subunit.</text>
</comment>
<comment type="pathway">
    <text evidence="2">Purine metabolism; IMP biosynthesis via de novo pathway; N(1)-(5-phospho-D-ribosyl)glycinamide from 5-phospho-alpha-D-ribose 1-diphosphate: step 2/2.</text>
</comment>
<comment type="similarity">
    <text evidence="2">Belongs to the GARS family.</text>
</comment>
<gene>
    <name evidence="2" type="primary">purD</name>
    <name type="ordered locus">BMEI1519</name>
</gene>
<evidence type="ECO:0000250" key="1"/>
<evidence type="ECO:0000255" key="2">
    <source>
        <dbReference type="HAMAP-Rule" id="MF_00138"/>
    </source>
</evidence>
<accession>Q8YFK1</accession>
<dbReference type="EC" id="6.3.4.13" evidence="2"/>
<dbReference type="EMBL" id="AE008917">
    <property type="protein sequence ID" value="AAL52700.1"/>
    <property type="molecule type" value="Genomic_DNA"/>
</dbReference>
<dbReference type="PIR" id="AI3441">
    <property type="entry name" value="AI3441"/>
</dbReference>
<dbReference type="RefSeq" id="WP_004686770.1">
    <property type="nucleotide sequence ID" value="NC_003317.1"/>
</dbReference>
<dbReference type="SMR" id="Q8YFK1"/>
<dbReference type="GeneID" id="29594365"/>
<dbReference type="KEGG" id="bme:BMEI1519"/>
<dbReference type="KEGG" id="bmel:DK63_1972"/>
<dbReference type="PATRIC" id="fig|224914.52.peg.2073"/>
<dbReference type="eggNOG" id="COG0151">
    <property type="taxonomic scope" value="Bacteria"/>
</dbReference>
<dbReference type="PhylomeDB" id="Q8YFK1"/>
<dbReference type="UniPathway" id="UPA00074">
    <property type="reaction ID" value="UER00125"/>
</dbReference>
<dbReference type="Proteomes" id="UP000000419">
    <property type="component" value="Chromosome I"/>
</dbReference>
<dbReference type="GO" id="GO:0005524">
    <property type="term" value="F:ATP binding"/>
    <property type="evidence" value="ECO:0007669"/>
    <property type="project" value="UniProtKB-KW"/>
</dbReference>
<dbReference type="GO" id="GO:0046872">
    <property type="term" value="F:metal ion binding"/>
    <property type="evidence" value="ECO:0007669"/>
    <property type="project" value="UniProtKB-KW"/>
</dbReference>
<dbReference type="GO" id="GO:0004637">
    <property type="term" value="F:phosphoribosylamine-glycine ligase activity"/>
    <property type="evidence" value="ECO:0007669"/>
    <property type="project" value="UniProtKB-UniRule"/>
</dbReference>
<dbReference type="GO" id="GO:0006189">
    <property type="term" value="P:'de novo' IMP biosynthetic process"/>
    <property type="evidence" value="ECO:0007669"/>
    <property type="project" value="UniProtKB-UniRule"/>
</dbReference>
<dbReference type="GO" id="GO:0009113">
    <property type="term" value="P:purine nucleobase biosynthetic process"/>
    <property type="evidence" value="ECO:0007669"/>
    <property type="project" value="InterPro"/>
</dbReference>
<dbReference type="FunFam" id="3.30.470.20:FF:000031">
    <property type="entry name" value="Phosphoribosylamine--glycine ligase"/>
    <property type="match status" value="1"/>
</dbReference>
<dbReference type="FunFam" id="3.40.50.20:FF:000006">
    <property type="entry name" value="Phosphoribosylamine--glycine ligase, chloroplastic"/>
    <property type="match status" value="1"/>
</dbReference>
<dbReference type="FunFam" id="3.90.600.10:FF:000001">
    <property type="entry name" value="Trifunctional purine biosynthetic protein adenosine-3"/>
    <property type="match status" value="1"/>
</dbReference>
<dbReference type="Gene3D" id="3.40.50.20">
    <property type="match status" value="1"/>
</dbReference>
<dbReference type="Gene3D" id="3.30.1490.20">
    <property type="entry name" value="ATP-grasp fold, A domain"/>
    <property type="match status" value="1"/>
</dbReference>
<dbReference type="Gene3D" id="3.30.470.20">
    <property type="entry name" value="ATP-grasp fold, B domain"/>
    <property type="match status" value="1"/>
</dbReference>
<dbReference type="Gene3D" id="3.90.600.10">
    <property type="entry name" value="Phosphoribosylglycinamide synthetase, C-terminal domain"/>
    <property type="match status" value="1"/>
</dbReference>
<dbReference type="HAMAP" id="MF_00138">
    <property type="entry name" value="GARS"/>
    <property type="match status" value="1"/>
</dbReference>
<dbReference type="InterPro" id="IPR011761">
    <property type="entry name" value="ATP-grasp"/>
</dbReference>
<dbReference type="InterPro" id="IPR013815">
    <property type="entry name" value="ATP_grasp_subdomain_1"/>
</dbReference>
<dbReference type="InterPro" id="IPR016185">
    <property type="entry name" value="PreATP-grasp_dom_sf"/>
</dbReference>
<dbReference type="InterPro" id="IPR020561">
    <property type="entry name" value="PRibGlycinamid_synth_ATP-grasp"/>
</dbReference>
<dbReference type="InterPro" id="IPR000115">
    <property type="entry name" value="PRibGlycinamide_synth"/>
</dbReference>
<dbReference type="InterPro" id="IPR020560">
    <property type="entry name" value="PRibGlycinamide_synth_C-dom"/>
</dbReference>
<dbReference type="InterPro" id="IPR037123">
    <property type="entry name" value="PRibGlycinamide_synth_C_sf"/>
</dbReference>
<dbReference type="InterPro" id="IPR020559">
    <property type="entry name" value="PRibGlycinamide_synth_CS"/>
</dbReference>
<dbReference type="InterPro" id="IPR020562">
    <property type="entry name" value="PRibGlycinamide_synth_N"/>
</dbReference>
<dbReference type="InterPro" id="IPR011054">
    <property type="entry name" value="Rudment_hybrid_motif"/>
</dbReference>
<dbReference type="NCBIfam" id="TIGR00877">
    <property type="entry name" value="purD"/>
    <property type="match status" value="1"/>
</dbReference>
<dbReference type="PANTHER" id="PTHR43472">
    <property type="entry name" value="PHOSPHORIBOSYLAMINE--GLYCINE LIGASE"/>
    <property type="match status" value="1"/>
</dbReference>
<dbReference type="PANTHER" id="PTHR43472:SF1">
    <property type="entry name" value="PHOSPHORIBOSYLAMINE--GLYCINE LIGASE, CHLOROPLASTIC"/>
    <property type="match status" value="1"/>
</dbReference>
<dbReference type="Pfam" id="PF01071">
    <property type="entry name" value="GARS_A"/>
    <property type="match status" value="1"/>
</dbReference>
<dbReference type="Pfam" id="PF02843">
    <property type="entry name" value="GARS_C"/>
    <property type="match status" value="1"/>
</dbReference>
<dbReference type="Pfam" id="PF02844">
    <property type="entry name" value="GARS_N"/>
    <property type="match status" value="1"/>
</dbReference>
<dbReference type="SMART" id="SM01209">
    <property type="entry name" value="GARS_A"/>
    <property type="match status" value="1"/>
</dbReference>
<dbReference type="SMART" id="SM01210">
    <property type="entry name" value="GARS_C"/>
    <property type="match status" value="1"/>
</dbReference>
<dbReference type="SUPFAM" id="SSF56059">
    <property type="entry name" value="Glutathione synthetase ATP-binding domain-like"/>
    <property type="match status" value="1"/>
</dbReference>
<dbReference type="SUPFAM" id="SSF52440">
    <property type="entry name" value="PreATP-grasp domain"/>
    <property type="match status" value="1"/>
</dbReference>
<dbReference type="SUPFAM" id="SSF51246">
    <property type="entry name" value="Rudiment single hybrid motif"/>
    <property type="match status" value="1"/>
</dbReference>
<dbReference type="PROSITE" id="PS50975">
    <property type="entry name" value="ATP_GRASP"/>
    <property type="match status" value="1"/>
</dbReference>
<dbReference type="PROSITE" id="PS00184">
    <property type="entry name" value="GARS"/>
    <property type="match status" value="1"/>
</dbReference>
<keyword id="KW-0067">ATP-binding</keyword>
<keyword id="KW-0436">Ligase</keyword>
<keyword id="KW-0460">Magnesium</keyword>
<keyword id="KW-0464">Manganese</keyword>
<keyword id="KW-0479">Metal-binding</keyword>
<keyword id="KW-0547">Nucleotide-binding</keyword>
<keyword id="KW-0658">Purine biosynthesis</keyword>